<dbReference type="EMBL" id="AF148686">
    <property type="protein sequence ID" value="AAD45272.1"/>
    <property type="molecule type" value="Genomic_DNA"/>
</dbReference>
<dbReference type="EMBL" id="AE014134">
    <property type="protein sequence ID" value="AAF52341.1"/>
    <property type="molecule type" value="Genomic_DNA"/>
</dbReference>
<dbReference type="EMBL" id="AE014134">
    <property type="protein sequence ID" value="ACZ94185.1"/>
    <property type="molecule type" value="Genomic_DNA"/>
</dbReference>
<dbReference type="EMBL" id="AY118281">
    <property type="protein sequence ID" value="AAM48310.1"/>
    <property type="molecule type" value="mRNA"/>
</dbReference>
<dbReference type="EMBL" id="BT072913">
    <property type="protein sequence ID" value="ACN81334.1"/>
    <property type="molecule type" value="mRNA"/>
</dbReference>
<dbReference type="RefSeq" id="NP_001162894.1">
    <property type="nucleotide sequence ID" value="NM_001169423.1"/>
</dbReference>
<dbReference type="RefSeq" id="NP_001285663.1">
    <property type="nucleotide sequence ID" value="NM_001298734.1"/>
</dbReference>
<dbReference type="RefSeq" id="NP_523490.1">
    <property type="nucleotide sequence ID" value="NM_078766.3"/>
</dbReference>
<dbReference type="BioGRID" id="60023">
    <property type="interactions" value="70"/>
</dbReference>
<dbReference type="DIP" id="DIP-20347N"/>
<dbReference type="FunCoup" id="Q9V447">
    <property type="interactions" value="2010"/>
</dbReference>
<dbReference type="IntAct" id="Q9V447">
    <property type="interactions" value="117"/>
</dbReference>
<dbReference type="STRING" id="7227.FBpp0078823"/>
<dbReference type="iPTMnet" id="Q9V447"/>
<dbReference type="PaxDb" id="7227-FBpp0078823"/>
<dbReference type="DNASU" id="33859"/>
<dbReference type="EnsemblMetazoa" id="FBtr0079192">
    <property type="protein sequence ID" value="FBpp0078823"/>
    <property type="gene ID" value="FBgn0266449"/>
</dbReference>
<dbReference type="EnsemblMetazoa" id="FBtr0302212">
    <property type="protein sequence ID" value="FBpp0291422"/>
    <property type="gene ID" value="FBgn0266449"/>
</dbReference>
<dbReference type="EnsemblMetazoa" id="FBtr0343126">
    <property type="protein sequence ID" value="FBpp0309826"/>
    <property type="gene ID" value="FBgn0266449"/>
</dbReference>
<dbReference type="GeneID" id="33859"/>
<dbReference type="KEGG" id="dme:Dmel_CG9159"/>
<dbReference type="AGR" id="FB:FBgn0266449"/>
<dbReference type="CTD" id="33859"/>
<dbReference type="FlyBase" id="FBgn0266449">
    <property type="gene designation" value="Kr-h2"/>
</dbReference>
<dbReference type="VEuPathDB" id="VectorBase:FBgn0266449"/>
<dbReference type="eggNOG" id="KOG4002">
    <property type="taxonomic scope" value="Eukaryota"/>
</dbReference>
<dbReference type="HOGENOM" id="CLU_071391_0_0_1"/>
<dbReference type="InParanoid" id="Q9V447"/>
<dbReference type="OMA" id="FFSIRPT"/>
<dbReference type="OrthoDB" id="5581259at2759"/>
<dbReference type="PhylomeDB" id="Q9V447"/>
<dbReference type="BioGRID-ORCS" id="33859">
    <property type="hits" value="0 hits in 1 CRISPR screen"/>
</dbReference>
<dbReference type="GenomeRNAi" id="33859"/>
<dbReference type="PRO" id="PR:Q9V447"/>
<dbReference type="Proteomes" id="UP000000803">
    <property type="component" value="Chromosome 2L"/>
</dbReference>
<dbReference type="Bgee" id="FBgn0266449">
    <property type="expression patterns" value="Expressed in spermathecum and 203 other cell types or tissues"/>
</dbReference>
<dbReference type="ExpressionAtlas" id="Q9V447">
    <property type="expression patterns" value="baseline and differential"/>
</dbReference>
<dbReference type="GO" id="GO:0012505">
    <property type="term" value="C:endomembrane system"/>
    <property type="evidence" value="ECO:0007005"/>
    <property type="project" value="FlyBase"/>
</dbReference>
<dbReference type="GO" id="GO:0005783">
    <property type="term" value="C:endoplasmic reticulum"/>
    <property type="evidence" value="ECO:0000318"/>
    <property type="project" value="GO_Central"/>
</dbReference>
<dbReference type="GO" id="GO:0016020">
    <property type="term" value="C:membrane"/>
    <property type="evidence" value="ECO:0007669"/>
    <property type="project" value="UniProtKB-SubCell"/>
</dbReference>
<dbReference type="GO" id="GO:0071786">
    <property type="term" value="P:endoplasmic reticulum tubular network organization"/>
    <property type="evidence" value="ECO:0000318"/>
    <property type="project" value="GO_Central"/>
</dbReference>
<dbReference type="GO" id="GO:0061024">
    <property type="term" value="P:membrane organization"/>
    <property type="evidence" value="ECO:0000318"/>
    <property type="project" value="GO_Central"/>
</dbReference>
<dbReference type="InterPro" id="IPR051645">
    <property type="entry name" value="PER33/POM33_regulator"/>
</dbReference>
<dbReference type="InterPro" id="IPR005344">
    <property type="entry name" value="TMEM33/Pom33"/>
</dbReference>
<dbReference type="PANTHER" id="PTHR12703">
    <property type="entry name" value="TRANSMEMBRANE PROTEIN 33"/>
    <property type="match status" value="1"/>
</dbReference>
<dbReference type="PANTHER" id="PTHR12703:SF4">
    <property type="entry name" value="TRANSMEMBRANE PROTEIN 33"/>
    <property type="match status" value="1"/>
</dbReference>
<dbReference type="Pfam" id="PF03661">
    <property type="entry name" value="TMEM33_Pom33"/>
    <property type="match status" value="1"/>
</dbReference>
<name>KRH2_DROME</name>
<feature type="chain" id="PRO_0000220903" description="Krueppel homolog 2">
    <location>
        <begin position="1"/>
        <end position="276"/>
    </location>
</feature>
<feature type="transmembrane region" description="Helical" evidence="1">
    <location>
        <begin position="53"/>
        <end position="73"/>
    </location>
</feature>
<feature type="transmembrane region" description="Helical" evidence="1">
    <location>
        <begin position="125"/>
        <end position="145"/>
    </location>
</feature>
<feature type="transmembrane region" description="Helical" evidence="1">
    <location>
        <begin position="181"/>
        <end position="201"/>
    </location>
</feature>
<feature type="region of interest" description="Disordered" evidence="2">
    <location>
        <begin position="1"/>
        <end position="37"/>
    </location>
</feature>
<feature type="compositionally biased region" description="Low complexity" evidence="2">
    <location>
        <begin position="18"/>
        <end position="35"/>
    </location>
</feature>
<feature type="modified residue" description="Phosphoserine" evidence="4">
    <location>
        <position position="22"/>
    </location>
</feature>
<gene>
    <name type="primary">Kr-h2</name>
    <name type="ORF">CG9159</name>
</gene>
<keyword id="KW-0472">Membrane</keyword>
<keyword id="KW-0597">Phosphoprotein</keyword>
<keyword id="KW-1185">Reference proteome</keyword>
<keyword id="KW-0812">Transmembrane</keyword>
<keyword id="KW-1133">Transmembrane helix</keyword>
<comment type="function">
    <text evidence="3">Member of the dosage-dependent hierarchy effective upon white gene expression.</text>
</comment>
<comment type="subcellular location">
    <subcellularLocation>
        <location evidence="5">Membrane</location>
        <topology evidence="5">Multi-pass membrane protein</topology>
    </subcellularLocation>
</comment>
<comment type="similarity">
    <text evidence="5">Belongs to the PER33/POM33 family.</text>
</comment>
<proteinExistence type="evidence at protein level"/>
<evidence type="ECO:0000255" key="1"/>
<evidence type="ECO:0000256" key="2">
    <source>
        <dbReference type="SAM" id="MobiDB-lite"/>
    </source>
</evidence>
<evidence type="ECO:0000269" key="3">
    <source>
    </source>
</evidence>
<evidence type="ECO:0000269" key="4">
    <source>
    </source>
</evidence>
<evidence type="ECO:0000305" key="5"/>
<accession>Q9V447</accession>
<accession>C0PV57</accession>
<accession>E1JHA1</accession>
<sequence>MSAPTDQPPRSEGAQTNSSERSSQQQEQPQQSQSQNVPAKLLQHFQTNRIDSALWALRLLVIFFTVSYVLPIFTSQQSAFSKVMLANAAISALRLHQRLPAFAFSREFLARLFAEDSCHYMMYSLIFFNIRPSLLVLIPVLLYSVLHASSYSLKLLDLIGQNSWWGARFIISIVEFQAANILKATAFCEIFIMPYAIVLAFMNHAGLMTPVIYYHYLVMRYSSRRNPYPRNAFAELRITFEALAARSPPAFAKIIRGGIGFVNRLAPQLQPAAAQE</sequence>
<protein>
    <recommendedName>
        <fullName>Krueppel homolog 2</fullName>
    </recommendedName>
    <alternativeName>
        <fullName>Protein Kr-h2</fullName>
    </alternativeName>
</protein>
<reference key="1">
    <citation type="journal article" date="2000" name="Genet. Res.">
        <title>Kruppel homolog (Kr h) is a dosage-dependent modifier of gene expression in Drosophila.</title>
        <authorList>
            <person name="Benevolenskaya E.V."/>
            <person name="Frolov M.V."/>
            <person name="Birchler J.A."/>
        </authorList>
    </citation>
    <scope>NUCLEOTIDE SEQUENCE [GENOMIC DNA]</scope>
    <scope>FUNCTION</scope>
    <source>
        <strain>Canton-S</strain>
    </source>
</reference>
<reference key="2">
    <citation type="journal article" date="2000" name="Science">
        <title>The genome sequence of Drosophila melanogaster.</title>
        <authorList>
            <person name="Adams M.D."/>
            <person name="Celniker S.E."/>
            <person name="Holt R.A."/>
            <person name="Evans C.A."/>
            <person name="Gocayne J.D."/>
            <person name="Amanatides P.G."/>
            <person name="Scherer S.E."/>
            <person name="Li P.W."/>
            <person name="Hoskins R.A."/>
            <person name="Galle R.F."/>
            <person name="George R.A."/>
            <person name="Lewis S.E."/>
            <person name="Richards S."/>
            <person name="Ashburner M."/>
            <person name="Henderson S.N."/>
            <person name="Sutton G.G."/>
            <person name="Wortman J.R."/>
            <person name="Yandell M.D."/>
            <person name="Zhang Q."/>
            <person name="Chen L.X."/>
            <person name="Brandon R.C."/>
            <person name="Rogers Y.-H.C."/>
            <person name="Blazej R.G."/>
            <person name="Champe M."/>
            <person name="Pfeiffer B.D."/>
            <person name="Wan K.H."/>
            <person name="Doyle C."/>
            <person name="Baxter E.G."/>
            <person name="Helt G."/>
            <person name="Nelson C.R."/>
            <person name="Miklos G.L.G."/>
            <person name="Abril J.F."/>
            <person name="Agbayani A."/>
            <person name="An H.-J."/>
            <person name="Andrews-Pfannkoch C."/>
            <person name="Baldwin D."/>
            <person name="Ballew R.M."/>
            <person name="Basu A."/>
            <person name="Baxendale J."/>
            <person name="Bayraktaroglu L."/>
            <person name="Beasley E.M."/>
            <person name="Beeson K.Y."/>
            <person name="Benos P.V."/>
            <person name="Berman B.P."/>
            <person name="Bhandari D."/>
            <person name="Bolshakov S."/>
            <person name="Borkova D."/>
            <person name="Botchan M.R."/>
            <person name="Bouck J."/>
            <person name="Brokstein P."/>
            <person name="Brottier P."/>
            <person name="Burtis K.C."/>
            <person name="Busam D.A."/>
            <person name="Butler H."/>
            <person name="Cadieu E."/>
            <person name="Center A."/>
            <person name="Chandra I."/>
            <person name="Cherry J.M."/>
            <person name="Cawley S."/>
            <person name="Dahlke C."/>
            <person name="Davenport L.B."/>
            <person name="Davies P."/>
            <person name="de Pablos B."/>
            <person name="Delcher A."/>
            <person name="Deng Z."/>
            <person name="Mays A.D."/>
            <person name="Dew I."/>
            <person name="Dietz S.M."/>
            <person name="Dodson K."/>
            <person name="Doup L.E."/>
            <person name="Downes M."/>
            <person name="Dugan-Rocha S."/>
            <person name="Dunkov B.C."/>
            <person name="Dunn P."/>
            <person name="Durbin K.J."/>
            <person name="Evangelista C.C."/>
            <person name="Ferraz C."/>
            <person name="Ferriera S."/>
            <person name="Fleischmann W."/>
            <person name="Fosler C."/>
            <person name="Gabrielian A.E."/>
            <person name="Garg N.S."/>
            <person name="Gelbart W.M."/>
            <person name="Glasser K."/>
            <person name="Glodek A."/>
            <person name="Gong F."/>
            <person name="Gorrell J.H."/>
            <person name="Gu Z."/>
            <person name="Guan P."/>
            <person name="Harris M."/>
            <person name="Harris N.L."/>
            <person name="Harvey D.A."/>
            <person name="Heiman T.J."/>
            <person name="Hernandez J.R."/>
            <person name="Houck J."/>
            <person name="Hostin D."/>
            <person name="Houston K.A."/>
            <person name="Howland T.J."/>
            <person name="Wei M.-H."/>
            <person name="Ibegwam C."/>
            <person name="Jalali M."/>
            <person name="Kalush F."/>
            <person name="Karpen G.H."/>
            <person name="Ke Z."/>
            <person name="Kennison J.A."/>
            <person name="Ketchum K.A."/>
            <person name="Kimmel B.E."/>
            <person name="Kodira C.D."/>
            <person name="Kraft C.L."/>
            <person name="Kravitz S."/>
            <person name="Kulp D."/>
            <person name="Lai Z."/>
            <person name="Lasko P."/>
            <person name="Lei Y."/>
            <person name="Levitsky A.A."/>
            <person name="Li J.H."/>
            <person name="Li Z."/>
            <person name="Liang Y."/>
            <person name="Lin X."/>
            <person name="Liu X."/>
            <person name="Mattei B."/>
            <person name="McIntosh T.C."/>
            <person name="McLeod M.P."/>
            <person name="McPherson D."/>
            <person name="Merkulov G."/>
            <person name="Milshina N.V."/>
            <person name="Mobarry C."/>
            <person name="Morris J."/>
            <person name="Moshrefi A."/>
            <person name="Mount S.M."/>
            <person name="Moy M."/>
            <person name="Murphy B."/>
            <person name="Murphy L."/>
            <person name="Muzny D.M."/>
            <person name="Nelson D.L."/>
            <person name="Nelson D.R."/>
            <person name="Nelson K.A."/>
            <person name="Nixon K."/>
            <person name="Nusskern D.R."/>
            <person name="Pacleb J.M."/>
            <person name="Palazzolo M."/>
            <person name="Pittman G.S."/>
            <person name="Pan S."/>
            <person name="Pollard J."/>
            <person name="Puri V."/>
            <person name="Reese M.G."/>
            <person name="Reinert K."/>
            <person name="Remington K."/>
            <person name="Saunders R.D.C."/>
            <person name="Scheeler F."/>
            <person name="Shen H."/>
            <person name="Shue B.C."/>
            <person name="Siden-Kiamos I."/>
            <person name="Simpson M."/>
            <person name="Skupski M.P."/>
            <person name="Smith T.J."/>
            <person name="Spier E."/>
            <person name="Spradling A.C."/>
            <person name="Stapleton M."/>
            <person name="Strong R."/>
            <person name="Sun E."/>
            <person name="Svirskas R."/>
            <person name="Tector C."/>
            <person name="Turner R."/>
            <person name="Venter E."/>
            <person name="Wang A.H."/>
            <person name="Wang X."/>
            <person name="Wang Z.-Y."/>
            <person name="Wassarman D.A."/>
            <person name="Weinstock G.M."/>
            <person name="Weissenbach J."/>
            <person name="Williams S.M."/>
            <person name="Woodage T."/>
            <person name="Worley K.C."/>
            <person name="Wu D."/>
            <person name="Yang S."/>
            <person name="Yao Q.A."/>
            <person name="Ye J."/>
            <person name="Yeh R.-F."/>
            <person name="Zaveri J.S."/>
            <person name="Zhan M."/>
            <person name="Zhang G."/>
            <person name="Zhao Q."/>
            <person name="Zheng L."/>
            <person name="Zheng X.H."/>
            <person name="Zhong F.N."/>
            <person name="Zhong W."/>
            <person name="Zhou X."/>
            <person name="Zhu S.C."/>
            <person name="Zhu X."/>
            <person name="Smith H.O."/>
            <person name="Gibbs R.A."/>
            <person name="Myers E.W."/>
            <person name="Rubin G.M."/>
            <person name="Venter J.C."/>
        </authorList>
    </citation>
    <scope>NUCLEOTIDE SEQUENCE [LARGE SCALE GENOMIC DNA]</scope>
    <source>
        <strain>Berkeley</strain>
    </source>
</reference>
<reference key="3">
    <citation type="journal article" date="2002" name="Genome Biol.">
        <title>Annotation of the Drosophila melanogaster euchromatic genome: a systematic review.</title>
        <authorList>
            <person name="Misra S."/>
            <person name="Crosby M.A."/>
            <person name="Mungall C.J."/>
            <person name="Matthews B.B."/>
            <person name="Campbell K.S."/>
            <person name="Hradecky P."/>
            <person name="Huang Y."/>
            <person name="Kaminker J.S."/>
            <person name="Millburn G.H."/>
            <person name="Prochnik S.E."/>
            <person name="Smith C.D."/>
            <person name="Tupy J.L."/>
            <person name="Whitfield E.J."/>
            <person name="Bayraktaroglu L."/>
            <person name="Berman B.P."/>
            <person name="Bettencourt B.R."/>
            <person name="Celniker S.E."/>
            <person name="de Grey A.D.N.J."/>
            <person name="Drysdale R.A."/>
            <person name="Harris N.L."/>
            <person name="Richter J."/>
            <person name="Russo S."/>
            <person name="Schroeder A.J."/>
            <person name="Shu S.Q."/>
            <person name="Stapleton M."/>
            <person name="Yamada C."/>
            <person name="Ashburner M."/>
            <person name="Gelbart W.M."/>
            <person name="Rubin G.M."/>
            <person name="Lewis S.E."/>
        </authorList>
    </citation>
    <scope>GENOME REANNOTATION</scope>
    <source>
        <strain>Berkeley</strain>
    </source>
</reference>
<reference key="4">
    <citation type="journal article" date="2002" name="Genome Biol.">
        <title>A Drosophila full-length cDNA resource.</title>
        <authorList>
            <person name="Stapleton M."/>
            <person name="Carlson J.W."/>
            <person name="Brokstein P."/>
            <person name="Yu C."/>
            <person name="Champe M."/>
            <person name="George R.A."/>
            <person name="Guarin H."/>
            <person name="Kronmiller B."/>
            <person name="Pacleb J.M."/>
            <person name="Park S."/>
            <person name="Wan K.H."/>
            <person name="Rubin G.M."/>
            <person name="Celniker S.E."/>
        </authorList>
    </citation>
    <scope>NUCLEOTIDE SEQUENCE [LARGE SCALE MRNA]</scope>
    <source>
        <strain>Berkeley</strain>
        <tissue>Testis</tissue>
    </source>
</reference>
<reference key="5">
    <citation type="submission" date="2009-03" db="EMBL/GenBank/DDBJ databases">
        <authorList>
            <person name="Carlson J.W."/>
            <person name="Booth B."/>
            <person name="Frise E."/>
            <person name="Sandler J."/>
            <person name="Wan K.H."/>
            <person name="Yu C."/>
            <person name="Celniker S.E."/>
        </authorList>
    </citation>
    <scope>NUCLEOTIDE SEQUENCE [LARGE SCALE MRNA]</scope>
    <source>
        <strain>Berkeley</strain>
    </source>
</reference>
<reference key="6">
    <citation type="journal article" date="2008" name="J. Proteome Res.">
        <title>Phosphoproteome analysis of Drosophila melanogaster embryos.</title>
        <authorList>
            <person name="Zhai B."/>
            <person name="Villen J."/>
            <person name="Beausoleil S.A."/>
            <person name="Mintseris J."/>
            <person name="Gygi S.P."/>
        </authorList>
    </citation>
    <scope>PHOSPHORYLATION [LARGE SCALE ANALYSIS] AT SER-22</scope>
    <scope>IDENTIFICATION BY MASS SPECTROMETRY</scope>
    <source>
        <tissue>Embryo</tissue>
    </source>
</reference>
<organism>
    <name type="scientific">Drosophila melanogaster</name>
    <name type="common">Fruit fly</name>
    <dbReference type="NCBI Taxonomy" id="7227"/>
    <lineage>
        <taxon>Eukaryota</taxon>
        <taxon>Metazoa</taxon>
        <taxon>Ecdysozoa</taxon>
        <taxon>Arthropoda</taxon>
        <taxon>Hexapoda</taxon>
        <taxon>Insecta</taxon>
        <taxon>Pterygota</taxon>
        <taxon>Neoptera</taxon>
        <taxon>Endopterygota</taxon>
        <taxon>Diptera</taxon>
        <taxon>Brachycera</taxon>
        <taxon>Muscomorpha</taxon>
        <taxon>Ephydroidea</taxon>
        <taxon>Drosophilidae</taxon>
        <taxon>Drosophila</taxon>
        <taxon>Sophophora</taxon>
    </lineage>
</organism>